<gene>
    <name evidence="1" type="primary">sufS</name>
    <name type="ordered locus">YPDSF_0748</name>
</gene>
<organism>
    <name type="scientific">Yersinia pestis (strain Pestoides F)</name>
    <dbReference type="NCBI Taxonomy" id="386656"/>
    <lineage>
        <taxon>Bacteria</taxon>
        <taxon>Pseudomonadati</taxon>
        <taxon>Pseudomonadota</taxon>
        <taxon>Gammaproteobacteria</taxon>
        <taxon>Enterobacterales</taxon>
        <taxon>Yersiniaceae</taxon>
        <taxon>Yersinia</taxon>
    </lineage>
</organism>
<name>SUFS_YERPP</name>
<accession>A4TIP2</accession>
<keyword id="KW-0963">Cytoplasm</keyword>
<keyword id="KW-0456">Lyase</keyword>
<keyword id="KW-0663">Pyridoxal phosphate</keyword>
<keyword id="KW-0808">Transferase</keyword>
<dbReference type="EC" id="2.8.1.7" evidence="1"/>
<dbReference type="EC" id="4.4.1.16" evidence="1"/>
<dbReference type="EMBL" id="CP000668">
    <property type="protein sequence ID" value="ABP39154.1"/>
    <property type="molecule type" value="Genomic_DNA"/>
</dbReference>
<dbReference type="RefSeq" id="WP_002211805.1">
    <property type="nucleotide sequence ID" value="NZ_CP009715.1"/>
</dbReference>
<dbReference type="SMR" id="A4TIP2"/>
<dbReference type="GeneID" id="57976274"/>
<dbReference type="KEGG" id="ypp:YPDSF_0748"/>
<dbReference type="PATRIC" id="fig|386656.14.peg.3120"/>
<dbReference type="UniPathway" id="UPA00266"/>
<dbReference type="GO" id="GO:0005737">
    <property type="term" value="C:cytoplasm"/>
    <property type="evidence" value="ECO:0007669"/>
    <property type="project" value="UniProtKB-SubCell"/>
</dbReference>
<dbReference type="GO" id="GO:0031071">
    <property type="term" value="F:cysteine desulfurase activity"/>
    <property type="evidence" value="ECO:0007669"/>
    <property type="project" value="UniProtKB-UniRule"/>
</dbReference>
<dbReference type="GO" id="GO:0030170">
    <property type="term" value="F:pyridoxal phosphate binding"/>
    <property type="evidence" value="ECO:0007669"/>
    <property type="project" value="InterPro"/>
</dbReference>
<dbReference type="GO" id="GO:0009000">
    <property type="term" value="F:selenocysteine lyase activity"/>
    <property type="evidence" value="ECO:0007669"/>
    <property type="project" value="UniProtKB-UniRule"/>
</dbReference>
<dbReference type="GO" id="GO:0006534">
    <property type="term" value="P:cysteine metabolic process"/>
    <property type="evidence" value="ECO:0007669"/>
    <property type="project" value="InterPro"/>
</dbReference>
<dbReference type="CDD" id="cd06453">
    <property type="entry name" value="SufS_like"/>
    <property type="match status" value="1"/>
</dbReference>
<dbReference type="Gene3D" id="3.90.1150.10">
    <property type="entry name" value="Aspartate Aminotransferase, domain 1"/>
    <property type="match status" value="1"/>
</dbReference>
<dbReference type="Gene3D" id="3.40.640.10">
    <property type="entry name" value="Type I PLP-dependent aspartate aminotransferase-like (Major domain)"/>
    <property type="match status" value="1"/>
</dbReference>
<dbReference type="HAMAP" id="MF_01831">
    <property type="entry name" value="SufS_aminotrans_5"/>
    <property type="match status" value="1"/>
</dbReference>
<dbReference type="InterPro" id="IPR000192">
    <property type="entry name" value="Aminotrans_V_dom"/>
</dbReference>
<dbReference type="InterPro" id="IPR020578">
    <property type="entry name" value="Aminotrans_V_PyrdxlP_BS"/>
</dbReference>
<dbReference type="InterPro" id="IPR010970">
    <property type="entry name" value="Cys_dSase_SufS"/>
</dbReference>
<dbReference type="InterPro" id="IPR015424">
    <property type="entry name" value="PyrdxlP-dep_Trfase"/>
</dbReference>
<dbReference type="InterPro" id="IPR015421">
    <property type="entry name" value="PyrdxlP-dep_Trfase_major"/>
</dbReference>
<dbReference type="InterPro" id="IPR015422">
    <property type="entry name" value="PyrdxlP-dep_Trfase_small"/>
</dbReference>
<dbReference type="NCBIfam" id="NF006791">
    <property type="entry name" value="PRK09295.1"/>
    <property type="match status" value="1"/>
</dbReference>
<dbReference type="NCBIfam" id="TIGR01979">
    <property type="entry name" value="sufS"/>
    <property type="match status" value="1"/>
</dbReference>
<dbReference type="PANTHER" id="PTHR43586">
    <property type="entry name" value="CYSTEINE DESULFURASE"/>
    <property type="match status" value="1"/>
</dbReference>
<dbReference type="PANTHER" id="PTHR43586:SF25">
    <property type="entry name" value="CYSTEINE DESULFURASE"/>
    <property type="match status" value="1"/>
</dbReference>
<dbReference type="Pfam" id="PF00266">
    <property type="entry name" value="Aminotran_5"/>
    <property type="match status" value="1"/>
</dbReference>
<dbReference type="SUPFAM" id="SSF53383">
    <property type="entry name" value="PLP-dependent transferases"/>
    <property type="match status" value="1"/>
</dbReference>
<dbReference type="PROSITE" id="PS00595">
    <property type="entry name" value="AA_TRANSFER_CLASS_5"/>
    <property type="match status" value="1"/>
</dbReference>
<reference key="1">
    <citation type="submission" date="2007-02" db="EMBL/GenBank/DDBJ databases">
        <title>Complete sequence of chromosome of Yersinia pestis Pestoides F.</title>
        <authorList>
            <consortium name="US DOE Joint Genome Institute"/>
            <person name="Copeland A."/>
            <person name="Lucas S."/>
            <person name="Lapidus A."/>
            <person name="Barry K."/>
            <person name="Detter J.C."/>
            <person name="Glavina del Rio T."/>
            <person name="Hammon N."/>
            <person name="Israni S."/>
            <person name="Dalin E."/>
            <person name="Tice H."/>
            <person name="Pitluck S."/>
            <person name="Di Bartolo G."/>
            <person name="Chain P."/>
            <person name="Malfatti S."/>
            <person name="Shin M."/>
            <person name="Vergez L."/>
            <person name="Schmutz J."/>
            <person name="Larimer F."/>
            <person name="Land M."/>
            <person name="Hauser L."/>
            <person name="Worsham P."/>
            <person name="Chu M."/>
            <person name="Bearden S."/>
            <person name="Garcia E."/>
            <person name="Richardson P."/>
        </authorList>
    </citation>
    <scope>NUCLEOTIDE SEQUENCE [LARGE SCALE GENOMIC DNA]</scope>
    <source>
        <strain>Pestoides F</strain>
    </source>
</reference>
<comment type="function">
    <text evidence="1">Cysteine desulfurases mobilize the sulfur from L-cysteine to yield L-alanine, an essential step in sulfur metabolism for biosynthesis of a variety of sulfur-containing biomolecules. Component of the suf operon, which is activated and required under specific conditions such as oxidative stress and iron limitation. Acts as a potent selenocysteine lyase in vitro, that mobilizes selenium from L-selenocysteine. Selenocysteine lyase activity is however unsure in vivo.</text>
</comment>
<comment type="catalytic activity">
    <reaction evidence="1">
        <text>(sulfur carrier)-H + L-cysteine = (sulfur carrier)-SH + L-alanine</text>
        <dbReference type="Rhea" id="RHEA:43892"/>
        <dbReference type="Rhea" id="RHEA-COMP:14737"/>
        <dbReference type="Rhea" id="RHEA-COMP:14739"/>
        <dbReference type="ChEBI" id="CHEBI:29917"/>
        <dbReference type="ChEBI" id="CHEBI:35235"/>
        <dbReference type="ChEBI" id="CHEBI:57972"/>
        <dbReference type="ChEBI" id="CHEBI:64428"/>
        <dbReference type="EC" id="2.8.1.7"/>
    </reaction>
</comment>
<comment type="catalytic activity">
    <reaction evidence="1">
        <text>L-selenocysteine + AH2 = hydrogenselenide + L-alanine + A + H(+)</text>
        <dbReference type="Rhea" id="RHEA:11632"/>
        <dbReference type="ChEBI" id="CHEBI:13193"/>
        <dbReference type="ChEBI" id="CHEBI:15378"/>
        <dbReference type="ChEBI" id="CHEBI:17499"/>
        <dbReference type="ChEBI" id="CHEBI:29317"/>
        <dbReference type="ChEBI" id="CHEBI:57843"/>
        <dbReference type="ChEBI" id="CHEBI:57972"/>
        <dbReference type="EC" id="4.4.1.16"/>
    </reaction>
</comment>
<comment type="cofactor">
    <cofactor evidence="1">
        <name>pyridoxal 5'-phosphate</name>
        <dbReference type="ChEBI" id="CHEBI:597326"/>
    </cofactor>
</comment>
<comment type="pathway">
    <text evidence="1">Cofactor biosynthesis; iron-sulfur cluster biosynthesis.</text>
</comment>
<comment type="subunit">
    <text evidence="1">Homodimer. Interacts with SufE and the SufBCD complex composed of SufB, SufC and SufD. The interaction with SufE is required to mediate the direct transfer of the sulfur atom from the S-sulfanylcysteine.</text>
</comment>
<comment type="subcellular location">
    <subcellularLocation>
        <location evidence="1">Cytoplasm</location>
    </subcellularLocation>
</comment>
<comment type="similarity">
    <text evidence="1">Belongs to the class-V pyridoxal-phosphate-dependent aminotransferase family. Csd subfamily.</text>
</comment>
<feature type="chain" id="PRO_1000070434" description="Cysteine desulfurase">
    <location>
        <begin position="1"/>
        <end position="406"/>
    </location>
</feature>
<feature type="active site" description="Cysteine persulfide intermediate" evidence="1">
    <location>
        <position position="364"/>
    </location>
</feature>
<feature type="modified residue" description="N6-(pyridoxal phosphate)lysine" evidence="1">
    <location>
        <position position="226"/>
    </location>
</feature>
<proteinExistence type="inferred from homology"/>
<sequence>MNFPIERVRADFPLLSRQVNGQPLVYLDSAASAQKPQAVIDKELHFYRDGYAAVHRGIHSLSAEATQQMEAVRTQVADFIHAASAEEIIFVRGTTEAINLVANSYGRHFLAAGDSIIITEMEHHANIVPWQMLAQDLGVEIRVWPLTATGELEITALAALIDDTTRLLAVTQVSNVLGTVNPIKDIVAQAKAAGLVVLVDGAQAVMHQPVDVQALGCDFYVFSGHKLYGPSGIGILYGKSALLQQMPPWEGGGAMIKTVSLTQGTTFADAPWRFEAGSPNTAGIMGLGAAIDYVTELGLLPIQQYEQSLMHYALAQLSQIKSLTLYGPTERAGVIAFNLGQHHAYDVGSFLDQYGIAIRTGHHCAMPLMAFYQVPSMCRASLALYNTREDVDRLVAGLQRIEKLLG</sequence>
<protein>
    <recommendedName>
        <fullName evidence="1">Cysteine desulfurase</fullName>
        <ecNumber evidence="1">2.8.1.7</ecNumber>
    </recommendedName>
    <alternativeName>
        <fullName evidence="1">Selenocysteine beta-lyase</fullName>
        <shortName evidence="1">SCL</shortName>
    </alternativeName>
    <alternativeName>
        <fullName evidence="1">Selenocysteine lyase</fullName>
        <ecNumber evidence="1">4.4.1.16</ecNumber>
    </alternativeName>
    <alternativeName>
        <fullName evidence="1">Selenocysteine reductase</fullName>
    </alternativeName>
</protein>
<evidence type="ECO:0000255" key="1">
    <source>
        <dbReference type="HAMAP-Rule" id="MF_01831"/>
    </source>
</evidence>